<reference key="1">
    <citation type="submission" date="2007-10" db="EMBL/GenBank/DDBJ databases">
        <title>Complete sequence of Desulfococcus oleovorans Hxd3.</title>
        <authorList>
            <consortium name="US DOE Joint Genome Institute"/>
            <person name="Copeland A."/>
            <person name="Lucas S."/>
            <person name="Lapidus A."/>
            <person name="Barry K."/>
            <person name="Glavina del Rio T."/>
            <person name="Dalin E."/>
            <person name="Tice H."/>
            <person name="Pitluck S."/>
            <person name="Kiss H."/>
            <person name="Brettin T."/>
            <person name="Bruce D."/>
            <person name="Detter J.C."/>
            <person name="Han C."/>
            <person name="Schmutz J."/>
            <person name="Larimer F."/>
            <person name="Land M."/>
            <person name="Hauser L."/>
            <person name="Kyrpides N."/>
            <person name="Kim E."/>
            <person name="Wawrik B."/>
            <person name="Richardson P."/>
        </authorList>
    </citation>
    <scope>NUCLEOTIDE SEQUENCE [LARGE SCALE GENOMIC DNA]</scope>
    <source>
        <strain>DSM 6200 / JCM 39069 / Hxd3</strain>
    </source>
</reference>
<proteinExistence type="inferred from homology"/>
<feature type="chain" id="PRO_1000198979" description="Aspartate--tRNA(Asp/Asn) ligase">
    <location>
        <begin position="1"/>
        <end position="597"/>
    </location>
</feature>
<feature type="region of interest" description="Aspartate" evidence="1">
    <location>
        <begin position="206"/>
        <end position="209"/>
    </location>
</feature>
<feature type="binding site" evidence="1">
    <location>
        <position position="182"/>
    </location>
    <ligand>
        <name>L-aspartate</name>
        <dbReference type="ChEBI" id="CHEBI:29991"/>
    </ligand>
</feature>
<feature type="binding site" evidence="1">
    <location>
        <begin position="228"/>
        <end position="230"/>
    </location>
    <ligand>
        <name>ATP</name>
        <dbReference type="ChEBI" id="CHEBI:30616"/>
    </ligand>
</feature>
<feature type="binding site" evidence="1">
    <location>
        <position position="228"/>
    </location>
    <ligand>
        <name>L-aspartate</name>
        <dbReference type="ChEBI" id="CHEBI:29991"/>
    </ligand>
</feature>
<feature type="binding site" evidence="1">
    <location>
        <position position="237"/>
    </location>
    <ligand>
        <name>ATP</name>
        <dbReference type="ChEBI" id="CHEBI:30616"/>
    </ligand>
</feature>
<feature type="binding site" evidence="1">
    <location>
        <position position="455"/>
    </location>
    <ligand>
        <name>L-aspartate</name>
        <dbReference type="ChEBI" id="CHEBI:29991"/>
    </ligand>
</feature>
<feature type="binding site" evidence="1">
    <location>
        <position position="489"/>
    </location>
    <ligand>
        <name>ATP</name>
        <dbReference type="ChEBI" id="CHEBI:30616"/>
    </ligand>
</feature>
<feature type="binding site" evidence="1">
    <location>
        <position position="496"/>
    </location>
    <ligand>
        <name>L-aspartate</name>
        <dbReference type="ChEBI" id="CHEBI:29991"/>
    </ligand>
</feature>
<feature type="binding site" evidence="1">
    <location>
        <begin position="541"/>
        <end position="544"/>
    </location>
    <ligand>
        <name>ATP</name>
        <dbReference type="ChEBI" id="CHEBI:30616"/>
    </ligand>
</feature>
<feature type="site" description="Important for tRNA non-discrimination" evidence="1">
    <location>
        <position position="38"/>
    </location>
</feature>
<sequence>MVDTLGNMRRTHTCNELSAASAGTEVVLAGWVQRRRDHGGVIFVDLRDREGITQVVFNPDREPAVHAKAHDIRNEYVICVKGKVEKRPDDMVNPKLTTGEIEVAASELAILNTAKTPPFMVEDRIDVSESIRLKHRFVDLRRPAMQKNLLARHRAGMAAREFLNSQGFLDIETPFLTRNTPEGARDYLVPSRVNPGAFYALPQSPQLFKQMLMVAGFDRYYQIVRCFRDEDLRADRQPEFTQIDLEMSFVGEEDVMAIGEGLVANVVRQVTGEAVDLPFSRMTYDQAMADYGLDKPDLRFDMKLVDITDIAAGCGFQVFSGAVKNGGIVKALNAKGCADFTRKELDDYTEFVAIYKARGLAWVKVREDGWQSPIAKFFTDDEKASMAQRLNMAVGDLVFFGADAASVVNDSLGNLRNRIGERLGLVDKNRMCFLWVTDFPFFEYDETEKRYQAKHHPFTAPHEADMEHLHTDPEAVRSRAYDLVLNGTEIGGGSIRIHNRQVQEKMFEALGLAPEDYTAKFGFLLDALDSGAPPHGGMAFGFDRLVMLLCGESSIREVIAFPKTQKAACALTDAPSPADKKQLDELFIKVTADINKE</sequence>
<keyword id="KW-0030">Aminoacyl-tRNA synthetase</keyword>
<keyword id="KW-0067">ATP-binding</keyword>
<keyword id="KW-0963">Cytoplasm</keyword>
<keyword id="KW-0436">Ligase</keyword>
<keyword id="KW-0547">Nucleotide-binding</keyword>
<keyword id="KW-0648">Protein biosynthesis</keyword>
<keyword id="KW-1185">Reference proteome</keyword>
<dbReference type="EC" id="6.1.1.23" evidence="1"/>
<dbReference type="EMBL" id="CP000859">
    <property type="protein sequence ID" value="ABW66480.1"/>
    <property type="molecule type" value="Genomic_DNA"/>
</dbReference>
<dbReference type="RefSeq" id="WP_012174099.1">
    <property type="nucleotide sequence ID" value="NC_009943.1"/>
</dbReference>
<dbReference type="SMR" id="A8ZUR7"/>
<dbReference type="STRING" id="96561.Dole_0670"/>
<dbReference type="KEGG" id="dol:Dole_0670"/>
<dbReference type="eggNOG" id="COG0173">
    <property type="taxonomic scope" value="Bacteria"/>
</dbReference>
<dbReference type="HOGENOM" id="CLU_014330_3_2_7"/>
<dbReference type="OrthoDB" id="9802326at2"/>
<dbReference type="Proteomes" id="UP000008561">
    <property type="component" value="Chromosome"/>
</dbReference>
<dbReference type="GO" id="GO:0005737">
    <property type="term" value="C:cytoplasm"/>
    <property type="evidence" value="ECO:0007669"/>
    <property type="project" value="UniProtKB-SubCell"/>
</dbReference>
<dbReference type="GO" id="GO:0004815">
    <property type="term" value="F:aspartate-tRNA ligase activity"/>
    <property type="evidence" value="ECO:0007669"/>
    <property type="project" value="UniProtKB-UniRule"/>
</dbReference>
<dbReference type="GO" id="GO:0050560">
    <property type="term" value="F:aspartate-tRNA(Asn) ligase activity"/>
    <property type="evidence" value="ECO:0007669"/>
    <property type="project" value="UniProtKB-EC"/>
</dbReference>
<dbReference type="GO" id="GO:0005524">
    <property type="term" value="F:ATP binding"/>
    <property type="evidence" value="ECO:0007669"/>
    <property type="project" value="UniProtKB-UniRule"/>
</dbReference>
<dbReference type="GO" id="GO:0003676">
    <property type="term" value="F:nucleic acid binding"/>
    <property type="evidence" value="ECO:0007669"/>
    <property type="project" value="InterPro"/>
</dbReference>
<dbReference type="GO" id="GO:0006422">
    <property type="term" value="P:aspartyl-tRNA aminoacylation"/>
    <property type="evidence" value="ECO:0007669"/>
    <property type="project" value="UniProtKB-UniRule"/>
</dbReference>
<dbReference type="CDD" id="cd00777">
    <property type="entry name" value="AspRS_core"/>
    <property type="match status" value="1"/>
</dbReference>
<dbReference type="CDD" id="cd04317">
    <property type="entry name" value="EcAspRS_like_N"/>
    <property type="match status" value="1"/>
</dbReference>
<dbReference type="Gene3D" id="3.30.930.10">
    <property type="entry name" value="Bira Bifunctional Protein, Domain 2"/>
    <property type="match status" value="1"/>
</dbReference>
<dbReference type="Gene3D" id="3.30.1360.30">
    <property type="entry name" value="GAD-like domain"/>
    <property type="match status" value="1"/>
</dbReference>
<dbReference type="Gene3D" id="2.40.50.140">
    <property type="entry name" value="Nucleic acid-binding proteins"/>
    <property type="match status" value="1"/>
</dbReference>
<dbReference type="HAMAP" id="MF_00044">
    <property type="entry name" value="Asp_tRNA_synth_type1"/>
    <property type="match status" value="1"/>
</dbReference>
<dbReference type="InterPro" id="IPR004364">
    <property type="entry name" value="Aa-tRNA-synt_II"/>
</dbReference>
<dbReference type="InterPro" id="IPR006195">
    <property type="entry name" value="aa-tRNA-synth_II"/>
</dbReference>
<dbReference type="InterPro" id="IPR045864">
    <property type="entry name" value="aa-tRNA-synth_II/BPL/LPL"/>
</dbReference>
<dbReference type="InterPro" id="IPR004524">
    <property type="entry name" value="Asp-tRNA-ligase_1"/>
</dbReference>
<dbReference type="InterPro" id="IPR047089">
    <property type="entry name" value="Asp-tRNA-ligase_1_N"/>
</dbReference>
<dbReference type="InterPro" id="IPR002312">
    <property type="entry name" value="Asp/Asn-tRNA-synth_IIb"/>
</dbReference>
<dbReference type="InterPro" id="IPR047090">
    <property type="entry name" value="AspRS_core"/>
</dbReference>
<dbReference type="InterPro" id="IPR004115">
    <property type="entry name" value="GAD-like_sf"/>
</dbReference>
<dbReference type="InterPro" id="IPR029351">
    <property type="entry name" value="GAD_dom"/>
</dbReference>
<dbReference type="InterPro" id="IPR012340">
    <property type="entry name" value="NA-bd_OB-fold"/>
</dbReference>
<dbReference type="InterPro" id="IPR004365">
    <property type="entry name" value="NA-bd_OB_tRNA"/>
</dbReference>
<dbReference type="NCBIfam" id="TIGR00459">
    <property type="entry name" value="aspS_bact"/>
    <property type="match status" value="1"/>
</dbReference>
<dbReference type="NCBIfam" id="NF001750">
    <property type="entry name" value="PRK00476.1"/>
    <property type="match status" value="1"/>
</dbReference>
<dbReference type="PANTHER" id="PTHR22594:SF5">
    <property type="entry name" value="ASPARTATE--TRNA LIGASE, MITOCHONDRIAL"/>
    <property type="match status" value="1"/>
</dbReference>
<dbReference type="PANTHER" id="PTHR22594">
    <property type="entry name" value="ASPARTYL/LYSYL-TRNA SYNTHETASE"/>
    <property type="match status" value="1"/>
</dbReference>
<dbReference type="Pfam" id="PF02938">
    <property type="entry name" value="GAD"/>
    <property type="match status" value="1"/>
</dbReference>
<dbReference type="Pfam" id="PF00152">
    <property type="entry name" value="tRNA-synt_2"/>
    <property type="match status" value="1"/>
</dbReference>
<dbReference type="Pfam" id="PF01336">
    <property type="entry name" value="tRNA_anti-codon"/>
    <property type="match status" value="1"/>
</dbReference>
<dbReference type="PRINTS" id="PR01042">
    <property type="entry name" value="TRNASYNTHASP"/>
</dbReference>
<dbReference type="SUPFAM" id="SSF55681">
    <property type="entry name" value="Class II aaRS and biotin synthetases"/>
    <property type="match status" value="1"/>
</dbReference>
<dbReference type="SUPFAM" id="SSF55261">
    <property type="entry name" value="GAD domain-like"/>
    <property type="match status" value="1"/>
</dbReference>
<dbReference type="SUPFAM" id="SSF50249">
    <property type="entry name" value="Nucleic acid-binding proteins"/>
    <property type="match status" value="1"/>
</dbReference>
<dbReference type="PROSITE" id="PS50862">
    <property type="entry name" value="AA_TRNA_LIGASE_II"/>
    <property type="match status" value="1"/>
</dbReference>
<name>SYDND_DESOH</name>
<evidence type="ECO:0000255" key="1">
    <source>
        <dbReference type="HAMAP-Rule" id="MF_00044"/>
    </source>
</evidence>
<protein>
    <recommendedName>
        <fullName evidence="1">Aspartate--tRNA(Asp/Asn) ligase</fullName>
        <ecNumber evidence="1">6.1.1.23</ecNumber>
    </recommendedName>
    <alternativeName>
        <fullName evidence="1">Aspartyl-tRNA synthetase</fullName>
        <shortName evidence="1">AspRS</shortName>
    </alternativeName>
    <alternativeName>
        <fullName evidence="1">Non-discriminating aspartyl-tRNA synthetase</fullName>
        <shortName evidence="1">ND-AspRS</shortName>
    </alternativeName>
</protein>
<organism>
    <name type="scientific">Desulfosudis oleivorans (strain DSM 6200 / JCM 39069 / Hxd3)</name>
    <name type="common">Desulfococcus oleovorans</name>
    <dbReference type="NCBI Taxonomy" id="96561"/>
    <lineage>
        <taxon>Bacteria</taxon>
        <taxon>Pseudomonadati</taxon>
        <taxon>Thermodesulfobacteriota</taxon>
        <taxon>Desulfobacteria</taxon>
        <taxon>Desulfobacterales</taxon>
        <taxon>Desulfosudaceae</taxon>
        <taxon>Desulfosudis</taxon>
    </lineage>
</organism>
<accession>A8ZUR7</accession>
<gene>
    <name evidence="1" type="primary">aspS</name>
    <name type="ordered locus">Dole_0670</name>
</gene>
<comment type="function">
    <text evidence="1">Aspartyl-tRNA synthetase with relaxed tRNA specificity since it is able to aspartylate not only its cognate tRNA(Asp) but also tRNA(Asn). Reaction proceeds in two steps: L-aspartate is first activated by ATP to form Asp-AMP and then transferred to the acceptor end of tRNA(Asp/Asn).</text>
</comment>
<comment type="catalytic activity">
    <reaction evidence="1">
        <text>tRNA(Asx) + L-aspartate + ATP = L-aspartyl-tRNA(Asx) + AMP + diphosphate</text>
        <dbReference type="Rhea" id="RHEA:18349"/>
        <dbReference type="Rhea" id="RHEA-COMP:9710"/>
        <dbReference type="Rhea" id="RHEA-COMP:9711"/>
        <dbReference type="ChEBI" id="CHEBI:29991"/>
        <dbReference type="ChEBI" id="CHEBI:30616"/>
        <dbReference type="ChEBI" id="CHEBI:33019"/>
        <dbReference type="ChEBI" id="CHEBI:78442"/>
        <dbReference type="ChEBI" id="CHEBI:78516"/>
        <dbReference type="ChEBI" id="CHEBI:456215"/>
        <dbReference type="EC" id="6.1.1.23"/>
    </reaction>
</comment>
<comment type="subunit">
    <text evidence="1">Homodimer.</text>
</comment>
<comment type="subcellular location">
    <subcellularLocation>
        <location evidence="1">Cytoplasm</location>
    </subcellularLocation>
</comment>
<comment type="similarity">
    <text evidence="1">Belongs to the class-II aminoacyl-tRNA synthetase family. Type 1 subfamily.</text>
</comment>